<reference key="1">
    <citation type="journal article" date="1997" name="J. Bacteriol.">
        <title>Complete genome sequence of Methanobacterium thermoautotrophicum deltaH: functional analysis and comparative genomics.</title>
        <authorList>
            <person name="Smith D.R."/>
            <person name="Doucette-Stamm L.A."/>
            <person name="Deloughery C."/>
            <person name="Lee H.-M."/>
            <person name="Dubois J."/>
            <person name="Aldredge T."/>
            <person name="Bashirzadeh R."/>
            <person name="Blakely D."/>
            <person name="Cook R."/>
            <person name="Gilbert K."/>
            <person name="Harrison D."/>
            <person name="Hoang L."/>
            <person name="Keagle P."/>
            <person name="Lumm W."/>
            <person name="Pothier B."/>
            <person name="Qiu D."/>
            <person name="Spadafora R."/>
            <person name="Vicare R."/>
            <person name="Wang Y."/>
            <person name="Wierzbowski J."/>
            <person name="Gibson R."/>
            <person name="Jiwani N."/>
            <person name="Caruso A."/>
            <person name="Bush D."/>
            <person name="Safer H."/>
            <person name="Patwell D."/>
            <person name="Prabhakar S."/>
            <person name="McDougall S."/>
            <person name="Shimer G."/>
            <person name="Goyal A."/>
            <person name="Pietrovski S."/>
            <person name="Church G.M."/>
            <person name="Daniels C.J."/>
            <person name="Mao J.-I."/>
            <person name="Rice P."/>
            <person name="Noelling J."/>
            <person name="Reeve J.N."/>
        </authorList>
    </citation>
    <scope>NUCLEOTIDE SEQUENCE [LARGE SCALE GENOMIC DNA]</scope>
    <source>
        <strain>ATCC 29096 / DSM 1053 / JCM 10044 / NBRC 100330 / Delta H</strain>
    </source>
</reference>
<reference key="2">
    <citation type="journal article" date="2010" name="Acta Crystallogr. D">
        <title>Structure of the Methanothermobacter thermautotrophicus exosome RNase PH ring.</title>
        <authorList>
            <person name="Ng C.L."/>
            <person name="Waterman D.G."/>
            <person name="Antson A.A."/>
            <person name="Ortiz-Lombardia M."/>
        </authorList>
    </citation>
    <scope>X-RAY CRYSTALLOGRAPHY (2.65 ANGSTROMS) IN COMPLEX WITH RRP41</scope>
</reference>
<organism>
    <name type="scientific">Methanothermobacter thermautotrophicus (strain ATCC 29096 / DSM 1053 / JCM 10044 / NBRC 100330 / Delta H)</name>
    <name type="common">Methanobacterium thermoautotrophicum</name>
    <dbReference type="NCBI Taxonomy" id="187420"/>
    <lineage>
        <taxon>Archaea</taxon>
        <taxon>Methanobacteriati</taxon>
        <taxon>Methanobacteriota</taxon>
        <taxon>Methanomada group</taxon>
        <taxon>Methanobacteria</taxon>
        <taxon>Methanobacteriales</taxon>
        <taxon>Methanobacteriaceae</taxon>
        <taxon>Methanothermobacter</taxon>
    </lineage>
</organism>
<protein>
    <recommendedName>
        <fullName evidence="1">Exosome complex component Rrp42</fullName>
    </recommendedName>
</protein>
<evidence type="ECO:0000255" key="1">
    <source>
        <dbReference type="HAMAP-Rule" id="MF_00622"/>
    </source>
</evidence>
<evidence type="ECO:0007829" key="2">
    <source>
        <dbReference type="PDB" id="2WNR"/>
    </source>
</evidence>
<gene>
    <name evidence="1" type="primary">rrp42</name>
    <name type="ordered locus">MTH_682</name>
</gene>
<sequence length="271" mass="29893">MVNKMDIIPEITRKSITDLINNKERIDGRSLHEFRDISIETGVISKAEGSSRVKLGNTQIIVGVKPQIGEPFPDTPEMGVILTNSELLPMASPTFEPGPPDERSVELSRVVDRCIRESRMIDLEKLCIIEGSKVWMLFLDLHIIDYDGNLFDAAVLATVAALLDTRIPAAEVEDGEVVINREKMQPLPVNRKALMCTFAKIGNEIVLDPSLEEEDILTARISIGVTEEGSICAMQKGGEGPLTRDDVLKAVSIAVEKVPQLIEYLDKSMTP</sequence>
<dbReference type="EMBL" id="AE000666">
    <property type="protein sequence ID" value="AAB85187.1"/>
    <property type="molecule type" value="Genomic_DNA"/>
</dbReference>
<dbReference type="PIR" id="H69190">
    <property type="entry name" value="H69190"/>
</dbReference>
<dbReference type="RefSeq" id="WP_010876321.1">
    <property type="nucleotide sequence ID" value="NC_000916.1"/>
</dbReference>
<dbReference type="PDB" id="2WNR">
    <property type="method" value="X-ray"/>
    <property type="resolution" value="2.65 A"/>
    <property type="chains" value="A/C/E=1-271"/>
</dbReference>
<dbReference type="PDBsum" id="2WNR"/>
<dbReference type="SMR" id="O26778"/>
<dbReference type="DIP" id="DIP-33664N"/>
<dbReference type="IntAct" id="O26778">
    <property type="interactions" value="2"/>
</dbReference>
<dbReference type="STRING" id="187420.MTH_682"/>
<dbReference type="PaxDb" id="187420-MTH_682"/>
<dbReference type="EnsemblBacteria" id="AAB85187">
    <property type="protein sequence ID" value="AAB85187"/>
    <property type="gene ID" value="MTH_682"/>
</dbReference>
<dbReference type="GeneID" id="82297141"/>
<dbReference type="KEGG" id="mth:MTH_682"/>
<dbReference type="PATRIC" id="fig|187420.15.peg.663"/>
<dbReference type="HOGENOM" id="CLU_038194_0_0_2"/>
<dbReference type="InParanoid" id="O26778"/>
<dbReference type="EvolutionaryTrace" id="O26778"/>
<dbReference type="Proteomes" id="UP000005223">
    <property type="component" value="Chromosome"/>
</dbReference>
<dbReference type="GO" id="GO:0000177">
    <property type="term" value="C:cytoplasmic exosome (RNase complex)"/>
    <property type="evidence" value="ECO:0007669"/>
    <property type="project" value="TreeGrafter"/>
</dbReference>
<dbReference type="GO" id="GO:0035925">
    <property type="term" value="F:mRNA 3'-UTR AU-rich region binding"/>
    <property type="evidence" value="ECO:0007669"/>
    <property type="project" value="TreeGrafter"/>
</dbReference>
<dbReference type="GO" id="GO:0016075">
    <property type="term" value="P:rRNA catabolic process"/>
    <property type="evidence" value="ECO:0007669"/>
    <property type="project" value="TreeGrafter"/>
</dbReference>
<dbReference type="CDD" id="cd11365">
    <property type="entry name" value="RNase_PH_archRRP42"/>
    <property type="match status" value="1"/>
</dbReference>
<dbReference type="FunFam" id="3.30.230.70:FF:000017">
    <property type="entry name" value="Exosome complex component Rrp42"/>
    <property type="match status" value="1"/>
</dbReference>
<dbReference type="Gene3D" id="3.30.230.70">
    <property type="entry name" value="GHMP Kinase, N-terminal domain"/>
    <property type="match status" value="1"/>
</dbReference>
<dbReference type="HAMAP" id="MF_00622">
    <property type="entry name" value="Exosome_Rrp42"/>
    <property type="match status" value="1"/>
</dbReference>
<dbReference type="InterPro" id="IPR001247">
    <property type="entry name" value="ExoRNase_PH_dom1"/>
</dbReference>
<dbReference type="InterPro" id="IPR015847">
    <property type="entry name" value="ExoRNase_PH_dom2"/>
</dbReference>
<dbReference type="InterPro" id="IPR036345">
    <property type="entry name" value="ExoRNase_PH_dom2_sf"/>
</dbReference>
<dbReference type="InterPro" id="IPR050590">
    <property type="entry name" value="Exosome_comp_Rrp42_subfam"/>
</dbReference>
<dbReference type="InterPro" id="IPR027408">
    <property type="entry name" value="PNPase/RNase_PH_dom_sf"/>
</dbReference>
<dbReference type="InterPro" id="IPR020568">
    <property type="entry name" value="Ribosomal_Su5_D2-typ_SF"/>
</dbReference>
<dbReference type="InterPro" id="IPR020869">
    <property type="entry name" value="Rrp42_archaea"/>
</dbReference>
<dbReference type="NCBIfam" id="NF003282">
    <property type="entry name" value="PRK04282.1-1"/>
    <property type="match status" value="1"/>
</dbReference>
<dbReference type="PANTHER" id="PTHR11097:SF8">
    <property type="entry name" value="EXOSOME COMPLEX COMPONENT RRP42"/>
    <property type="match status" value="1"/>
</dbReference>
<dbReference type="PANTHER" id="PTHR11097">
    <property type="entry name" value="EXOSOME COMPLEX EXONUCLEASE RIBOSOMAL RNA PROCESSING PROTEIN"/>
    <property type="match status" value="1"/>
</dbReference>
<dbReference type="Pfam" id="PF01138">
    <property type="entry name" value="RNase_PH"/>
    <property type="match status" value="1"/>
</dbReference>
<dbReference type="Pfam" id="PF03725">
    <property type="entry name" value="RNase_PH_C"/>
    <property type="match status" value="1"/>
</dbReference>
<dbReference type="SUPFAM" id="SSF55666">
    <property type="entry name" value="Ribonuclease PH domain 2-like"/>
    <property type="match status" value="1"/>
</dbReference>
<dbReference type="SUPFAM" id="SSF54211">
    <property type="entry name" value="Ribosomal protein S5 domain 2-like"/>
    <property type="match status" value="1"/>
</dbReference>
<feature type="chain" id="PRO_0000140000" description="Exosome complex component Rrp42">
    <location>
        <begin position="1"/>
        <end position="271"/>
    </location>
</feature>
<feature type="helix" evidence="2">
    <location>
        <begin position="11"/>
        <end position="21"/>
    </location>
</feature>
<feature type="strand" evidence="2">
    <location>
        <begin position="37"/>
        <end position="42"/>
    </location>
</feature>
<feature type="strand" evidence="2">
    <location>
        <begin position="47"/>
        <end position="55"/>
    </location>
</feature>
<feature type="strand" evidence="2">
    <location>
        <begin position="58"/>
        <end position="69"/>
    </location>
</feature>
<feature type="strand" evidence="2">
    <location>
        <begin position="80"/>
        <end position="87"/>
    </location>
</feature>
<feature type="helix" evidence="2">
    <location>
        <begin position="89"/>
        <end position="91"/>
    </location>
</feature>
<feature type="helix" evidence="2">
    <location>
        <begin position="102"/>
        <end position="117"/>
    </location>
</feature>
<feature type="helix" evidence="2">
    <location>
        <begin position="123"/>
        <end position="126"/>
    </location>
</feature>
<feature type="strand" evidence="2">
    <location>
        <begin position="127"/>
        <end position="129"/>
    </location>
</feature>
<feature type="turn" evidence="2">
    <location>
        <begin position="130"/>
        <end position="132"/>
    </location>
</feature>
<feature type="strand" evidence="2">
    <location>
        <begin position="133"/>
        <end position="145"/>
    </location>
</feature>
<feature type="helix" evidence="2">
    <location>
        <begin position="150"/>
        <end position="164"/>
    </location>
</feature>
<feature type="strand" evidence="2">
    <location>
        <begin position="166"/>
        <end position="173"/>
    </location>
</feature>
<feature type="strand" evidence="2">
    <location>
        <begin position="176"/>
        <end position="186"/>
    </location>
</feature>
<feature type="strand" evidence="2">
    <location>
        <begin position="193"/>
        <end position="201"/>
    </location>
</feature>
<feature type="strand" evidence="2">
    <location>
        <begin position="204"/>
        <end position="208"/>
    </location>
</feature>
<feature type="helix" evidence="2">
    <location>
        <begin position="211"/>
        <end position="214"/>
    </location>
</feature>
<feature type="strand" evidence="2">
    <location>
        <begin position="218"/>
        <end position="226"/>
    </location>
</feature>
<feature type="strand" evidence="2">
    <location>
        <begin position="231"/>
        <end position="240"/>
    </location>
</feature>
<feature type="helix" evidence="2">
    <location>
        <begin position="244"/>
        <end position="268"/>
    </location>
</feature>
<proteinExistence type="evidence at protein level"/>
<keyword id="KW-0002">3D-structure</keyword>
<keyword id="KW-0963">Cytoplasm</keyword>
<keyword id="KW-0271">Exosome</keyword>
<keyword id="KW-1185">Reference proteome</keyword>
<comment type="function">
    <text evidence="1">Non-catalytic component of the exosome, which is a complex involved in RNA degradation. Contributes to the structuring of the Rrp41 active site.</text>
</comment>
<comment type="subunit">
    <text evidence="1">Component of the archaeal exosome complex. Forms a hexameric ring-like arrangement composed of 3 Rrp41-Rrp42 heterodimers. The hexameric ring associates with a trimer of Rrp4 and/or Csl4 subunits.</text>
</comment>
<comment type="interaction">
    <interactant intactId="EBI-764215">
        <id>O26778</id>
    </interactant>
    <interactant intactId="EBI-764220">
        <id>O26779</id>
        <label>rrp41</label>
    </interactant>
    <organismsDiffer>false</organismsDiffer>
    <experiments>2</experiments>
</comment>
<comment type="subcellular location">
    <subcellularLocation>
        <location evidence="1">Cytoplasm</location>
    </subcellularLocation>
</comment>
<comment type="similarity">
    <text evidence="1">Belongs to the RNase PH family. Rrp42 subfamily.</text>
</comment>
<accession>O26778</accession>
<name>RRP42_METTH</name>